<protein>
    <recommendedName>
        <fullName evidence="1">tRNA uridine(34) hydroxylase</fullName>
        <ecNumber evidence="1">1.14.-.-</ecNumber>
    </recommendedName>
    <alternativeName>
        <fullName evidence="1">tRNA hydroxylation protein O</fullName>
    </alternativeName>
</protein>
<organism>
    <name type="scientific">Rickettsia conorii (strain ATCC VR-613 / Malish 7)</name>
    <dbReference type="NCBI Taxonomy" id="272944"/>
    <lineage>
        <taxon>Bacteria</taxon>
        <taxon>Pseudomonadati</taxon>
        <taxon>Pseudomonadota</taxon>
        <taxon>Alphaproteobacteria</taxon>
        <taxon>Rickettsiales</taxon>
        <taxon>Rickettsiaceae</taxon>
        <taxon>Rickettsieae</taxon>
        <taxon>Rickettsia</taxon>
        <taxon>spotted fever group</taxon>
    </lineage>
</organism>
<reference key="1">
    <citation type="journal article" date="2001" name="Science">
        <title>Mechanisms of evolution in Rickettsia conorii and R. prowazekii.</title>
        <authorList>
            <person name="Ogata H."/>
            <person name="Audic S."/>
            <person name="Renesto-Audiffren P."/>
            <person name="Fournier P.-E."/>
            <person name="Barbe V."/>
            <person name="Samson D."/>
            <person name="Roux V."/>
            <person name="Cossart P."/>
            <person name="Weissenbach J."/>
            <person name="Claverie J.-M."/>
            <person name="Raoult D."/>
        </authorList>
    </citation>
    <scope>NUCLEOTIDE SEQUENCE [LARGE SCALE GENOMIC DNA]</scope>
    <source>
        <strain>ATCC VR-613 / Malish 7</strain>
    </source>
</reference>
<dbReference type="EC" id="1.14.-.-" evidence="1"/>
<dbReference type="EMBL" id="AE006914">
    <property type="protein sequence ID" value="AAL02705.1"/>
    <property type="molecule type" value="Genomic_DNA"/>
</dbReference>
<dbReference type="PIR" id="G97720">
    <property type="entry name" value="G97720"/>
</dbReference>
<dbReference type="RefSeq" id="WP_010976842.1">
    <property type="nucleotide sequence ID" value="NC_003103.1"/>
</dbReference>
<dbReference type="SMR" id="Q92JA0"/>
<dbReference type="GeneID" id="928026"/>
<dbReference type="KEGG" id="rco:RC0167"/>
<dbReference type="PATRIC" id="fig|272944.4.peg.196"/>
<dbReference type="HOGENOM" id="CLU_038878_0_1_5"/>
<dbReference type="Proteomes" id="UP000000816">
    <property type="component" value="Chromosome"/>
</dbReference>
<dbReference type="GO" id="GO:0016705">
    <property type="term" value="F:oxidoreductase activity, acting on paired donors, with incorporation or reduction of molecular oxygen"/>
    <property type="evidence" value="ECO:0007669"/>
    <property type="project" value="UniProtKB-UniRule"/>
</dbReference>
<dbReference type="GO" id="GO:0006400">
    <property type="term" value="P:tRNA modification"/>
    <property type="evidence" value="ECO:0007669"/>
    <property type="project" value="UniProtKB-UniRule"/>
</dbReference>
<dbReference type="CDD" id="cd01518">
    <property type="entry name" value="RHOD_YceA"/>
    <property type="match status" value="1"/>
</dbReference>
<dbReference type="Gene3D" id="3.30.70.100">
    <property type="match status" value="1"/>
</dbReference>
<dbReference type="Gene3D" id="3.40.250.10">
    <property type="entry name" value="Rhodanese-like domain"/>
    <property type="match status" value="1"/>
</dbReference>
<dbReference type="HAMAP" id="MF_00469">
    <property type="entry name" value="TrhO"/>
    <property type="match status" value="1"/>
</dbReference>
<dbReference type="InterPro" id="IPR001763">
    <property type="entry name" value="Rhodanese-like_dom"/>
</dbReference>
<dbReference type="InterPro" id="IPR036873">
    <property type="entry name" value="Rhodanese-like_dom_sf"/>
</dbReference>
<dbReference type="InterPro" id="IPR020936">
    <property type="entry name" value="TrhO"/>
</dbReference>
<dbReference type="InterPro" id="IPR040503">
    <property type="entry name" value="TRHO_N"/>
</dbReference>
<dbReference type="NCBIfam" id="NF002397">
    <property type="entry name" value="PRK01415.1"/>
    <property type="match status" value="1"/>
</dbReference>
<dbReference type="PANTHER" id="PTHR43268:SF3">
    <property type="entry name" value="RHODANESE-LIKE DOMAIN-CONTAINING PROTEIN 7-RELATED"/>
    <property type="match status" value="1"/>
</dbReference>
<dbReference type="PANTHER" id="PTHR43268">
    <property type="entry name" value="THIOSULFATE SULFURTRANSFERASE/RHODANESE-LIKE DOMAIN-CONTAINING PROTEIN 2"/>
    <property type="match status" value="1"/>
</dbReference>
<dbReference type="Pfam" id="PF00581">
    <property type="entry name" value="Rhodanese"/>
    <property type="match status" value="1"/>
</dbReference>
<dbReference type="Pfam" id="PF17773">
    <property type="entry name" value="UPF0176_N"/>
    <property type="match status" value="1"/>
</dbReference>
<dbReference type="SMART" id="SM00450">
    <property type="entry name" value="RHOD"/>
    <property type="match status" value="1"/>
</dbReference>
<dbReference type="SUPFAM" id="SSF52821">
    <property type="entry name" value="Rhodanese/Cell cycle control phosphatase"/>
    <property type="match status" value="1"/>
</dbReference>
<dbReference type="PROSITE" id="PS50206">
    <property type="entry name" value="RHODANESE_3"/>
    <property type="match status" value="1"/>
</dbReference>
<feature type="chain" id="PRO_0000161504" description="tRNA uridine(34) hydroxylase">
    <location>
        <begin position="1"/>
        <end position="247"/>
    </location>
</feature>
<feature type="domain" description="Rhodanese" evidence="1">
    <location>
        <begin position="124"/>
        <end position="218"/>
    </location>
</feature>
<feature type="active site" description="Cysteine persulfide intermediate" evidence="1">
    <location>
        <position position="178"/>
    </location>
</feature>
<sequence length="247" mass="28308">MNEKIAILSAYSFVNIEEPANLIPKLLLIGKRKYVRGTILLANEGFNGSFSGSYENVNLVLEELIKLTGPKDVNVKINYSDVHPFQKLKVRLKKEIVAMNVDGLNVDLFKGEYIEPKDWDEFITQQDVIVIDTRNDYEVEVGTFKSAINPNTKTFKQFPAWVQQNQELLKGKKIAMVCTGGIRCEKSTSLLKSIGYDEVYHLKGGILQYLEDTQNKNNLWQGECFVFDDRRAVTDDLSPVERHWLQR</sequence>
<evidence type="ECO:0000255" key="1">
    <source>
        <dbReference type="HAMAP-Rule" id="MF_00469"/>
    </source>
</evidence>
<proteinExistence type="inferred from homology"/>
<accession>Q92JA0</accession>
<comment type="function">
    <text evidence="1">Catalyzes oxygen-dependent 5-hydroxyuridine (ho5U) modification at position 34 in tRNAs.</text>
</comment>
<comment type="catalytic activity">
    <reaction evidence="1">
        <text>uridine(34) in tRNA + AH2 + O2 = 5-hydroxyuridine(34) in tRNA + A + H2O</text>
        <dbReference type="Rhea" id="RHEA:64224"/>
        <dbReference type="Rhea" id="RHEA-COMP:11727"/>
        <dbReference type="Rhea" id="RHEA-COMP:13381"/>
        <dbReference type="ChEBI" id="CHEBI:13193"/>
        <dbReference type="ChEBI" id="CHEBI:15377"/>
        <dbReference type="ChEBI" id="CHEBI:15379"/>
        <dbReference type="ChEBI" id="CHEBI:17499"/>
        <dbReference type="ChEBI" id="CHEBI:65315"/>
        <dbReference type="ChEBI" id="CHEBI:136877"/>
    </reaction>
</comment>
<comment type="similarity">
    <text evidence="1">Belongs to the TrhO family.</text>
</comment>
<gene>
    <name evidence="1" type="primary">trhO</name>
    <name type="ordered locus">RC0167</name>
</gene>
<name>TRHO_RICCN</name>
<keyword id="KW-0560">Oxidoreductase</keyword>
<keyword id="KW-0819">tRNA processing</keyword>